<accession>C3LTN3</accession>
<feature type="chain" id="PRO_1000146009" description="Chaperone protein HtpG">
    <location>
        <begin position="1"/>
        <end position="635"/>
    </location>
</feature>
<feature type="region of interest" description="A; substrate-binding" evidence="1">
    <location>
        <begin position="1"/>
        <end position="344"/>
    </location>
</feature>
<feature type="region of interest" description="B" evidence="1">
    <location>
        <begin position="345"/>
        <end position="561"/>
    </location>
</feature>
<feature type="region of interest" description="C" evidence="1">
    <location>
        <begin position="562"/>
        <end position="635"/>
    </location>
</feature>
<protein>
    <recommendedName>
        <fullName evidence="1">Chaperone protein HtpG</fullName>
    </recommendedName>
    <alternativeName>
        <fullName evidence="1">Heat shock protein HtpG</fullName>
    </alternativeName>
    <alternativeName>
        <fullName evidence="1">High temperature protein G</fullName>
    </alternativeName>
</protein>
<comment type="function">
    <text evidence="1">Molecular chaperone. Has ATPase activity.</text>
</comment>
<comment type="subunit">
    <text evidence="1">Homodimer.</text>
</comment>
<comment type="subcellular location">
    <subcellularLocation>
        <location evidence="1">Cytoplasm</location>
    </subcellularLocation>
</comment>
<comment type="similarity">
    <text evidence="1">Belongs to the heat shock protein 90 family.</text>
</comment>
<name>HTPG_VIBCM</name>
<sequence>MSETATTNKETRGFQSEVKQLLHLMIHSLYSNKEIFLRELISNASDAVDKLRFQALSHPDLYQGDAELGVKLSFDKDKNTLTISDNGIGMTRDEVIENLGTIAKSGTAEFFSKLSQEQSKNSQLIGQFGVGFYSAFIVADAVTVRTRAAGSAPADAVQWYSKGEGEYTVETINKESRGTDIILHLREEGKEFLSEWRLRDVISKYSDHIGIPVYIQTSVMDEEGKATEETKWEQINKAQALWTRAKSEVTDEEYKEFYKHVSHDFADPLVWSHNKVEGKNDYTSLLYIPAKAPWDLFNREHKHGLKLYVQRVFIMDDAAQFMPSYLRFVRGLIDSNDLPLNVSREILQDNKITQSLRQACTKRVLTMLERMASNDADNYQKFWKEFGLVMKEGPAEDFANREKIASLLRFASTHIDSAEQTISLASYVERMKEGQDKIYYLTADSYTAAKNSPHLEQFKSKGIEVILMFDRIDEWLMNYLPEFEGKAFQSITKAGLDLSQFEDEAEKEKHKETEEQFKSVVERLKGYLGSRVKEVRTTFKLANTPAVVVTDDYEMGTQMAKLLAAAGQPVPEVKYILEVNPEHALVKRMADEADEQTFGRWAEVLLGQAMLAERGSMEDPSQFLGAVNQLLAPSH</sequence>
<organism>
    <name type="scientific">Vibrio cholerae serotype O1 (strain M66-2)</name>
    <dbReference type="NCBI Taxonomy" id="579112"/>
    <lineage>
        <taxon>Bacteria</taxon>
        <taxon>Pseudomonadati</taxon>
        <taxon>Pseudomonadota</taxon>
        <taxon>Gammaproteobacteria</taxon>
        <taxon>Vibrionales</taxon>
        <taxon>Vibrionaceae</taxon>
        <taxon>Vibrio</taxon>
    </lineage>
</organism>
<dbReference type="EMBL" id="CP001233">
    <property type="protein sequence ID" value="ACP05259.1"/>
    <property type="molecule type" value="Genomic_DNA"/>
</dbReference>
<dbReference type="RefSeq" id="WP_001889892.1">
    <property type="nucleotide sequence ID" value="NC_012578.1"/>
</dbReference>
<dbReference type="SMR" id="C3LTN3"/>
<dbReference type="KEGG" id="vcm:VCM66_0941"/>
<dbReference type="HOGENOM" id="CLU_006684_3_0_6"/>
<dbReference type="Proteomes" id="UP000001217">
    <property type="component" value="Chromosome I"/>
</dbReference>
<dbReference type="GO" id="GO:0005737">
    <property type="term" value="C:cytoplasm"/>
    <property type="evidence" value="ECO:0007669"/>
    <property type="project" value="UniProtKB-SubCell"/>
</dbReference>
<dbReference type="GO" id="GO:0005524">
    <property type="term" value="F:ATP binding"/>
    <property type="evidence" value="ECO:0007669"/>
    <property type="project" value="UniProtKB-UniRule"/>
</dbReference>
<dbReference type="GO" id="GO:0016887">
    <property type="term" value="F:ATP hydrolysis activity"/>
    <property type="evidence" value="ECO:0007669"/>
    <property type="project" value="InterPro"/>
</dbReference>
<dbReference type="GO" id="GO:0140662">
    <property type="term" value="F:ATP-dependent protein folding chaperone"/>
    <property type="evidence" value="ECO:0007669"/>
    <property type="project" value="InterPro"/>
</dbReference>
<dbReference type="GO" id="GO:0051082">
    <property type="term" value="F:unfolded protein binding"/>
    <property type="evidence" value="ECO:0007669"/>
    <property type="project" value="UniProtKB-UniRule"/>
</dbReference>
<dbReference type="CDD" id="cd16927">
    <property type="entry name" value="HATPase_Hsp90-like"/>
    <property type="match status" value="1"/>
</dbReference>
<dbReference type="FunFam" id="1.20.120.790:FF:000002">
    <property type="entry name" value="Molecular chaperone HtpG"/>
    <property type="match status" value="1"/>
</dbReference>
<dbReference type="FunFam" id="3.30.230.80:FF:000002">
    <property type="entry name" value="Molecular chaperone HtpG"/>
    <property type="match status" value="1"/>
</dbReference>
<dbReference type="FunFam" id="3.30.565.10:FF:000009">
    <property type="entry name" value="Molecular chaperone HtpG"/>
    <property type="match status" value="1"/>
</dbReference>
<dbReference type="FunFam" id="3.40.50.11260:FF:000002">
    <property type="entry name" value="Molecular chaperone HtpG"/>
    <property type="match status" value="1"/>
</dbReference>
<dbReference type="Gene3D" id="3.30.230.80">
    <property type="match status" value="1"/>
</dbReference>
<dbReference type="Gene3D" id="3.40.50.11260">
    <property type="match status" value="1"/>
</dbReference>
<dbReference type="Gene3D" id="1.20.120.790">
    <property type="entry name" value="Heat shock protein 90, C-terminal domain"/>
    <property type="match status" value="1"/>
</dbReference>
<dbReference type="Gene3D" id="3.30.565.10">
    <property type="entry name" value="Histidine kinase-like ATPase, C-terminal domain"/>
    <property type="match status" value="1"/>
</dbReference>
<dbReference type="HAMAP" id="MF_00505">
    <property type="entry name" value="HSP90"/>
    <property type="match status" value="1"/>
</dbReference>
<dbReference type="InterPro" id="IPR036890">
    <property type="entry name" value="HATPase_C_sf"/>
</dbReference>
<dbReference type="InterPro" id="IPR019805">
    <property type="entry name" value="Heat_shock_protein_90_CS"/>
</dbReference>
<dbReference type="InterPro" id="IPR037196">
    <property type="entry name" value="HSP90_C"/>
</dbReference>
<dbReference type="InterPro" id="IPR001404">
    <property type="entry name" value="Hsp90_fam"/>
</dbReference>
<dbReference type="InterPro" id="IPR020575">
    <property type="entry name" value="Hsp90_N"/>
</dbReference>
<dbReference type="InterPro" id="IPR020568">
    <property type="entry name" value="Ribosomal_Su5_D2-typ_SF"/>
</dbReference>
<dbReference type="NCBIfam" id="NF003555">
    <property type="entry name" value="PRK05218.1"/>
    <property type="match status" value="1"/>
</dbReference>
<dbReference type="PANTHER" id="PTHR11528">
    <property type="entry name" value="HEAT SHOCK PROTEIN 90 FAMILY MEMBER"/>
    <property type="match status" value="1"/>
</dbReference>
<dbReference type="Pfam" id="PF13589">
    <property type="entry name" value="HATPase_c_3"/>
    <property type="match status" value="1"/>
</dbReference>
<dbReference type="Pfam" id="PF00183">
    <property type="entry name" value="HSP90"/>
    <property type="match status" value="1"/>
</dbReference>
<dbReference type="PIRSF" id="PIRSF002583">
    <property type="entry name" value="Hsp90"/>
    <property type="match status" value="1"/>
</dbReference>
<dbReference type="PRINTS" id="PR00775">
    <property type="entry name" value="HEATSHOCK90"/>
</dbReference>
<dbReference type="SMART" id="SM00387">
    <property type="entry name" value="HATPase_c"/>
    <property type="match status" value="1"/>
</dbReference>
<dbReference type="SUPFAM" id="SSF55874">
    <property type="entry name" value="ATPase domain of HSP90 chaperone/DNA topoisomerase II/histidine kinase"/>
    <property type="match status" value="1"/>
</dbReference>
<dbReference type="SUPFAM" id="SSF110942">
    <property type="entry name" value="HSP90 C-terminal domain"/>
    <property type="match status" value="1"/>
</dbReference>
<dbReference type="SUPFAM" id="SSF54211">
    <property type="entry name" value="Ribosomal protein S5 domain 2-like"/>
    <property type="match status" value="1"/>
</dbReference>
<dbReference type="PROSITE" id="PS00298">
    <property type="entry name" value="HSP90"/>
    <property type="match status" value="1"/>
</dbReference>
<proteinExistence type="inferred from homology"/>
<gene>
    <name evidence="1" type="primary">htpG</name>
    <name type="ordered locus">VCM66_0941</name>
</gene>
<keyword id="KW-0067">ATP-binding</keyword>
<keyword id="KW-0143">Chaperone</keyword>
<keyword id="KW-0963">Cytoplasm</keyword>
<keyword id="KW-0547">Nucleotide-binding</keyword>
<keyword id="KW-0346">Stress response</keyword>
<evidence type="ECO:0000255" key="1">
    <source>
        <dbReference type="HAMAP-Rule" id="MF_00505"/>
    </source>
</evidence>
<reference key="1">
    <citation type="journal article" date="2008" name="PLoS ONE">
        <title>A recalibrated molecular clock and independent origins for the cholera pandemic clones.</title>
        <authorList>
            <person name="Feng L."/>
            <person name="Reeves P.R."/>
            <person name="Lan R."/>
            <person name="Ren Y."/>
            <person name="Gao C."/>
            <person name="Zhou Z."/>
            <person name="Ren Y."/>
            <person name="Cheng J."/>
            <person name="Wang W."/>
            <person name="Wang J."/>
            <person name="Qian W."/>
            <person name="Li D."/>
            <person name="Wang L."/>
        </authorList>
    </citation>
    <scope>NUCLEOTIDE SEQUENCE [LARGE SCALE GENOMIC DNA]</scope>
    <source>
        <strain>M66-2</strain>
    </source>
</reference>